<name>DBP3_VANPO</name>
<reference key="1">
    <citation type="journal article" date="2007" name="Proc. Natl. Acad. Sci. U.S.A.">
        <title>Independent sorting-out of thousands of duplicated gene pairs in two yeast species descended from a whole-genome duplication.</title>
        <authorList>
            <person name="Scannell D.R."/>
            <person name="Frank A.C."/>
            <person name="Conant G.C."/>
            <person name="Byrne K.P."/>
            <person name="Woolfit M."/>
            <person name="Wolfe K.H."/>
        </authorList>
    </citation>
    <scope>NUCLEOTIDE SEQUENCE [LARGE SCALE GENOMIC DNA]</scope>
    <source>
        <strain>ATCC 22028 / DSM 70294 / BCRC 21397 / CBS 2163 / NBRC 10782 / NRRL Y-8283 / UCD 57-17</strain>
    </source>
</reference>
<proteinExistence type="inferred from homology"/>
<dbReference type="EC" id="3.6.4.13"/>
<dbReference type="EMBL" id="DS480399">
    <property type="protein sequence ID" value="EDO17735.1"/>
    <property type="molecule type" value="Genomic_DNA"/>
</dbReference>
<dbReference type="RefSeq" id="XP_001645593.1">
    <property type="nucleotide sequence ID" value="XM_001645543.1"/>
</dbReference>
<dbReference type="SMR" id="A7TJ36"/>
<dbReference type="FunCoup" id="A7TJ36">
    <property type="interactions" value="454"/>
</dbReference>
<dbReference type="STRING" id="436907.A7TJ36"/>
<dbReference type="GeneID" id="5545979"/>
<dbReference type="KEGG" id="vpo:Kpol_1033p40"/>
<dbReference type="eggNOG" id="KOG0331">
    <property type="taxonomic scope" value="Eukaryota"/>
</dbReference>
<dbReference type="HOGENOM" id="CLU_003041_1_5_1"/>
<dbReference type="InParanoid" id="A7TJ36"/>
<dbReference type="OMA" id="KKTHDMY"/>
<dbReference type="OrthoDB" id="196131at2759"/>
<dbReference type="PhylomeDB" id="A7TJ36"/>
<dbReference type="Proteomes" id="UP000000267">
    <property type="component" value="Unassembled WGS sequence"/>
</dbReference>
<dbReference type="GO" id="GO:0005730">
    <property type="term" value="C:nucleolus"/>
    <property type="evidence" value="ECO:0007669"/>
    <property type="project" value="UniProtKB-SubCell"/>
</dbReference>
<dbReference type="GO" id="GO:0030687">
    <property type="term" value="C:preribosome, large subunit precursor"/>
    <property type="evidence" value="ECO:0007669"/>
    <property type="project" value="EnsemblFungi"/>
</dbReference>
<dbReference type="GO" id="GO:0005524">
    <property type="term" value="F:ATP binding"/>
    <property type="evidence" value="ECO:0007669"/>
    <property type="project" value="UniProtKB-KW"/>
</dbReference>
<dbReference type="GO" id="GO:0016887">
    <property type="term" value="F:ATP hydrolysis activity"/>
    <property type="evidence" value="ECO:0007669"/>
    <property type="project" value="RHEA"/>
</dbReference>
<dbReference type="GO" id="GO:0003723">
    <property type="term" value="F:RNA binding"/>
    <property type="evidence" value="ECO:0007669"/>
    <property type="project" value="UniProtKB-KW"/>
</dbReference>
<dbReference type="GO" id="GO:0003724">
    <property type="term" value="F:RNA helicase activity"/>
    <property type="evidence" value="ECO:0007669"/>
    <property type="project" value="UniProtKB-EC"/>
</dbReference>
<dbReference type="GO" id="GO:0000464">
    <property type="term" value="P:endonucleolytic cleavage in ITS1 upstream of 5.8S rRNA from tricistronic rRNA transcript (SSU-rRNA, 5.8S rRNA, LSU-rRNA)"/>
    <property type="evidence" value="ECO:0007669"/>
    <property type="project" value="EnsemblFungi"/>
</dbReference>
<dbReference type="CDD" id="cd00268">
    <property type="entry name" value="DEADc"/>
    <property type="match status" value="1"/>
</dbReference>
<dbReference type="CDD" id="cd18787">
    <property type="entry name" value="SF2_C_DEAD"/>
    <property type="match status" value="1"/>
</dbReference>
<dbReference type="FunFam" id="3.40.50.300:FF:002174">
    <property type="entry name" value="ATP-dependent RNA helicase DBP3"/>
    <property type="match status" value="1"/>
</dbReference>
<dbReference type="FunFam" id="3.40.50.300:FF:000008">
    <property type="entry name" value="ATP-dependent RNA helicase RhlB"/>
    <property type="match status" value="1"/>
</dbReference>
<dbReference type="Gene3D" id="3.40.50.300">
    <property type="entry name" value="P-loop containing nucleotide triphosphate hydrolases"/>
    <property type="match status" value="2"/>
</dbReference>
<dbReference type="InterPro" id="IPR011545">
    <property type="entry name" value="DEAD/DEAH_box_helicase_dom"/>
</dbReference>
<dbReference type="InterPro" id="IPR014001">
    <property type="entry name" value="Helicase_ATP-bd"/>
</dbReference>
<dbReference type="InterPro" id="IPR001650">
    <property type="entry name" value="Helicase_C-like"/>
</dbReference>
<dbReference type="InterPro" id="IPR027417">
    <property type="entry name" value="P-loop_NTPase"/>
</dbReference>
<dbReference type="InterPro" id="IPR000629">
    <property type="entry name" value="RNA-helicase_DEAD-box_CS"/>
</dbReference>
<dbReference type="PANTHER" id="PTHR47958">
    <property type="entry name" value="ATP-DEPENDENT RNA HELICASE DBP3"/>
    <property type="match status" value="1"/>
</dbReference>
<dbReference type="Pfam" id="PF00270">
    <property type="entry name" value="DEAD"/>
    <property type="match status" value="1"/>
</dbReference>
<dbReference type="Pfam" id="PF00271">
    <property type="entry name" value="Helicase_C"/>
    <property type="match status" value="1"/>
</dbReference>
<dbReference type="SMART" id="SM00487">
    <property type="entry name" value="DEXDc"/>
    <property type="match status" value="1"/>
</dbReference>
<dbReference type="SMART" id="SM00490">
    <property type="entry name" value="HELICc"/>
    <property type="match status" value="1"/>
</dbReference>
<dbReference type="SUPFAM" id="SSF52540">
    <property type="entry name" value="P-loop containing nucleoside triphosphate hydrolases"/>
    <property type="match status" value="1"/>
</dbReference>
<dbReference type="PROSITE" id="PS00039">
    <property type="entry name" value="DEAD_ATP_HELICASE"/>
    <property type="match status" value="1"/>
</dbReference>
<dbReference type="PROSITE" id="PS51192">
    <property type="entry name" value="HELICASE_ATP_BIND_1"/>
    <property type="match status" value="1"/>
</dbReference>
<dbReference type="PROSITE" id="PS51194">
    <property type="entry name" value="HELICASE_CTER"/>
    <property type="match status" value="1"/>
</dbReference>
<dbReference type="PROSITE" id="PS51195">
    <property type="entry name" value="Q_MOTIF"/>
    <property type="match status" value="1"/>
</dbReference>
<comment type="function">
    <text evidence="1">ATP-dependent RNA helicase required for 60S ribosomal subunit synthesis. Involved in efficient pre-rRNA processing, predominantly at site A3, which is necessary for the normal formation of 25S and 5.8S rRNAs (By similarity).</text>
</comment>
<comment type="catalytic activity">
    <reaction>
        <text>ATP + H2O = ADP + phosphate + H(+)</text>
        <dbReference type="Rhea" id="RHEA:13065"/>
        <dbReference type="ChEBI" id="CHEBI:15377"/>
        <dbReference type="ChEBI" id="CHEBI:15378"/>
        <dbReference type="ChEBI" id="CHEBI:30616"/>
        <dbReference type="ChEBI" id="CHEBI:43474"/>
        <dbReference type="ChEBI" id="CHEBI:456216"/>
        <dbReference type="EC" id="3.6.4.13"/>
    </reaction>
</comment>
<comment type="subcellular location">
    <subcellularLocation>
        <location evidence="1">Nucleus</location>
        <location evidence="1">Nucleolus</location>
    </subcellularLocation>
</comment>
<comment type="domain">
    <text>The Q motif is unique to and characteristic of the DEAD box family of RNA helicases and controls ATP binding and hydrolysis.</text>
</comment>
<comment type="similarity">
    <text evidence="6">Belongs to the DEAD box helicase family. DDX5/DBP2 subfamily.</text>
</comment>
<feature type="chain" id="PRO_0000310194" description="ATP-dependent RNA helicase DBP3">
    <location>
        <begin position="1"/>
        <end position="530"/>
    </location>
</feature>
<feature type="domain" description="Helicase ATP-binding" evidence="3">
    <location>
        <begin position="146"/>
        <end position="322"/>
    </location>
</feature>
<feature type="domain" description="Helicase C-terminal" evidence="4">
    <location>
        <begin position="351"/>
        <end position="500"/>
    </location>
</feature>
<feature type="region of interest" description="Disordered" evidence="5">
    <location>
        <begin position="1"/>
        <end position="77"/>
    </location>
</feature>
<feature type="coiled-coil region" evidence="2">
    <location>
        <begin position="19"/>
        <end position="58"/>
    </location>
</feature>
<feature type="short sequence motif" description="Q motif">
    <location>
        <begin position="117"/>
        <end position="143"/>
    </location>
</feature>
<feature type="short sequence motif" description="DEAD box">
    <location>
        <begin position="269"/>
        <end position="272"/>
    </location>
</feature>
<feature type="compositionally biased region" description="Basic and acidic residues" evidence="5">
    <location>
        <begin position="1"/>
        <end position="20"/>
    </location>
</feature>
<feature type="compositionally biased region" description="Basic residues" evidence="5">
    <location>
        <begin position="21"/>
        <end position="50"/>
    </location>
</feature>
<feature type="compositionally biased region" description="Low complexity" evidence="5">
    <location>
        <begin position="67"/>
        <end position="77"/>
    </location>
</feature>
<feature type="binding site" evidence="3">
    <location>
        <begin position="159"/>
        <end position="166"/>
    </location>
    <ligand>
        <name>ATP</name>
        <dbReference type="ChEBI" id="CHEBI:30616"/>
    </ligand>
</feature>
<protein>
    <recommendedName>
        <fullName>ATP-dependent RNA helicase DBP3</fullName>
        <ecNumber>3.6.4.13</ecNumber>
    </recommendedName>
</protein>
<organism>
    <name type="scientific">Vanderwaltozyma polyspora (strain ATCC 22028 / DSM 70294 / BCRC 21397 / CBS 2163 / NBRC 10782 / NRRL Y-8283 / UCD 57-17)</name>
    <name type="common">Kluyveromyces polysporus</name>
    <dbReference type="NCBI Taxonomy" id="436907"/>
    <lineage>
        <taxon>Eukaryota</taxon>
        <taxon>Fungi</taxon>
        <taxon>Dikarya</taxon>
        <taxon>Ascomycota</taxon>
        <taxon>Saccharomycotina</taxon>
        <taxon>Saccharomycetes</taxon>
        <taxon>Saccharomycetales</taxon>
        <taxon>Saccharomycetaceae</taxon>
        <taxon>Vanderwaltozyma</taxon>
    </lineage>
</organism>
<keyword id="KW-0067">ATP-binding</keyword>
<keyword id="KW-0175">Coiled coil</keyword>
<keyword id="KW-0347">Helicase</keyword>
<keyword id="KW-0378">Hydrolase</keyword>
<keyword id="KW-0547">Nucleotide-binding</keyword>
<keyword id="KW-0539">Nucleus</keyword>
<keyword id="KW-1185">Reference proteome</keyword>
<keyword id="KW-0690">Ribosome biogenesis</keyword>
<keyword id="KW-0694">RNA-binding</keyword>
<keyword id="KW-0698">rRNA processing</keyword>
<accession>A7TJ36</accession>
<gene>
    <name type="primary">DBP3</name>
    <name type="ORF">Kpol_1033p40</name>
</gene>
<evidence type="ECO:0000250" key="1"/>
<evidence type="ECO:0000255" key="2"/>
<evidence type="ECO:0000255" key="3">
    <source>
        <dbReference type="PROSITE-ProRule" id="PRU00541"/>
    </source>
</evidence>
<evidence type="ECO:0000255" key="4">
    <source>
        <dbReference type="PROSITE-ProRule" id="PRU00542"/>
    </source>
</evidence>
<evidence type="ECO:0000256" key="5">
    <source>
        <dbReference type="SAM" id="MobiDB-lite"/>
    </source>
</evidence>
<evidence type="ECO:0000305" key="6"/>
<sequence length="530" mass="59290">MSKDEIKDKKRKSEEYEVVDKKKHKKDKKDKKEKKDKKEKKLKKDKKDKKDKKETKSESESNEDNESVASVSTSSTVDGYTENADLLKVPQSEIDEFFTTNEVAVEDESKLNLRPLLSFSHISLDSRIQAEISKFPKPTPIQAVSWPYLLAGKDVIGVAETGSGKTFAFGVPAINNILTKSGSKPGKNGIQVLIISPTRELASQIYDNLVILTDKVGLECCCVYGGVPKDEQRTQLKRSQVVVATPGRLLDLIQEGAANLSNVNYLVLDEADRMLEKGFEEDIKNIIRETKSTGRQTLMFTATWPKEVRELASTFMNSPIKVSIGNTDELSANKRITQIVEVIDPFKKERKLLELLKKYQSGSKKDDKVLIFALYKKEAARVERNLNYNGYKVSAIHGDLSQQQRTNALDEFKTGRSSILLATDVAARGLDIPNVKTVINLTFPLTVEDYVHRIGRTGRAGKTGTAHTLFTEQEKHLAGSLVNVLNGAGQPVPEELKKFGTHTKKKEHSAYGAFYKDVDMTKKAKKITFD</sequence>